<dbReference type="EC" id="3.5.1.77" evidence="3"/>
<dbReference type="EMBL" id="AY787759">
    <property type="protein sequence ID" value="AAV53595.1"/>
    <property type="molecule type" value="Genomic_DNA"/>
</dbReference>
<dbReference type="SMR" id="Q5S260"/>
<dbReference type="KEGG" id="ag:AAV53595"/>
<dbReference type="BRENDA" id="3.5.1.77">
    <property type="organism ID" value="8538"/>
</dbReference>
<dbReference type="GO" id="GO:0047417">
    <property type="term" value="F:N-carbamoyl-D-amino acid hydrolase activity"/>
    <property type="evidence" value="ECO:0000314"/>
    <property type="project" value="UniProtKB"/>
</dbReference>
<dbReference type="GO" id="GO:0051289">
    <property type="term" value="P:protein homotetramerization"/>
    <property type="evidence" value="ECO:0000314"/>
    <property type="project" value="UniProtKB"/>
</dbReference>
<dbReference type="CDD" id="cd07569">
    <property type="entry name" value="DCase"/>
    <property type="match status" value="1"/>
</dbReference>
<dbReference type="Gene3D" id="3.60.110.10">
    <property type="entry name" value="Carbon-nitrogen hydrolase"/>
    <property type="match status" value="1"/>
</dbReference>
<dbReference type="InterPro" id="IPR050345">
    <property type="entry name" value="Aliph_Amidase/BUP"/>
</dbReference>
<dbReference type="InterPro" id="IPR003010">
    <property type="entry name" value="C-N_Hydrolase"/>
</dbReference>
<dbReference type="InterPro" id="IPR036526">
    <property type="entry name" value="C-N_Hydrolase_sf"/>
</dbReference>
<dbReference type="PANTHER" id="PTHR43674">
    <property type="entry name" value="NITRILASE C965.09-RELATED"/>
    <property type="match status" value="1"/>
</dbReference>
<dbReference type="PANTHER" id="PTHR43674:SF12">
    <property type="entry name" value="NITRILASE C965.09-RELATED"/>
    <property type="match status" value="1"/>
</dbReference>
<dbReference type="Pfam" id="PF00795">
    <property type="entry name" value="CN_hydrolase"/>
    <property type="match status" value="1"/>
</dbReference>
<dbReference type="SUPFAM" id="SSF56317">
    <property type="entry name" value="Carbon-nitrogen hydrolase"/>
    <property type="match status" value="1"/>
</dbReference>
<dbReference type="PROSITE" id="PS50263">
    <property type="entry name" value="CN_HYDROLASE"/>
    <property type="match status" value="1"/>
</dbReference>
<comment type="function">
    <text evidence="3">Catalyzes the hydrolysis of N-carbamoyl-D-amino acids to the corresponding D-amino acids. Hydrolyzes aromatic and aliphatic N-carbamoyl-D-amino acids in vitro. Effectively hydrolyzes N-carbamoyl-D-p-hydroxyphenylglycine and N-carbamoyl-DL-p-hydroxyphenylglycine, and to a lesser extent N-carbamoyl-D-methionine. No activity for N-carbamoyl-L-amino acids, N-carbamoyl-beta-alanine or (RS)-alpha-ethyl-N-carbamoylphenylglycine in vitro.</text>
</comment>
<comment type="catalytic activity">
    <reaction evidence="3">
        <text>an N-carbamoyl-D-amino acid + H2O + 2 H(+) = a D-alpha-amino acid + NH4(+) + CO2</text>
        <dbReference type="Rhea" id="RHEA:11000"/>
        <dbReference type="ChEBI" id="CHEBI:15377"/>
        <dbReference type="ChEBI" id="CHEBI:15378"/>
        <dbReference type="ChEBI" id="CHEBI:16526"/>
        <dbReference type="ChEBI" id="CHEBI:28938"/>
        <dbReference type="ChEBI" id="CHEBI:59871"/>
        <dbReference type="ChEBI" id="CHEBI:85602"/>
        <dbReference type="EC" id="3.5.1.77"/>
    </reaction>
</comment>
<comment type="activity regulation">
    <text evidence="3">The activity decreases with increasing concentration of H(2)O(2). Has 68% and 43% of activity remaining upon treatment with 0.1 and 0.2 mM H(2)O(2) for 30 minutes, respectively. Inhibited significantly by 2 mM Zn(2+), Cu(2+) and Ag(+), moderately by Co(2+), Mn(2+), Sn(2+) and Mg(2+), and only slightly by Ba(2+). Slightly activated by Fe(2+) and Ca(2+). No effect on activity by metal chelators EDTA and 8-hydroxyquinoline at 2 mM or by dithiothreitol, 2-mercaptoethanol or phenylmethanesulfonyl fluoride.</text>
</comment>
<comment type="biophysicochemical properties">
    <kinetics>
        <KM evidence="3">3.76 mM for N-carbamoyl-D-p-hydroxyphenylglycine</KM>
        <Vmax evidence="3">383.0 umol/min/mg enzyme</Vmax>
    </kinetics>
    <phDependence>
        <text evidence="3">Optimum pH is 7.0. Stable at pH 6.5-8.2.</text>
    </phDependence>
    <temperatureDependence>
        <text evidence="3">Optimum temperature is 60 degrees Celsius. Very thermostable as still has 98% of its activity after incubation for 30 minutes at 50 degrees Celsius.</text>
    </temperatureDependence>
</comment>
<comment type="subunit">
    <text evidence="3">Homotetramer.</text>
</comment>
<comment type="biotechnology">
    <text evidence="4">Has potential for industrial application in the enzymatic production of D-amino acids, which are very valuable intermediates for the production of semisynthetic antibiotics, peptide hormones, and pesticides.</text>
</comment>
<sequence length="304" mass="34366">MTRQMILAVGQQGPIARAETREQVVVRLLYMLTKAASRGANFIVFPELAFTTFFPRWHFTDEAELDSFYETEMPGPVVRPLFEKAAELGIGFNLGYAELVVEGGVKRRFNTSILVDKPGKIVGKYRKIHLPGHKEYEAYRPFQHLEKRYFEPGDLGFPVYDVDAAKMGMFICNDRRWPEAWRVMGLRGAEIICGGYNTPTHNPPVPQHDHLTSFHHLLSMQAGSYQNGAWSAAAGKVGMEENCMLLGHSCIVAPTGEIVALTTTLEDEVITAAVCLDRCRELREHIFNFKQHRQPQHYGLIAEL</sequence>
<keyword id="KW-0903">Direct protein sequencing</keyword>
<keyword id="KW-0378">Hydrolase</keyword>
<evidence type="ECO:0000250" key="1">
    <source>
        <dbReference type="UniProtKB" id="Q44185"/>
    </source>
</evidence>
<evidence type="ECO:0000255" key="2">
    <source>
        <dbReference type="PROSITE-ProRule" id="PRU00054"/>
    </source>
</evidence>
<evidence type="ECO:0000269" key="3">
    <source>
    </source>
</evidence>
<evidence type="ECO:0000303" key="4">
    <source>
    </source>
</evidence>
<evidence type="ECO:0000305" key="5">
    <source>
    </source>
</evidence>
<evidence type="ECO:0000312" key="6">
    <source>
        <dbReference type="EMBL" id="AAV53595.1"/>
    </source>
</evidence>
<organism evidence="6">
    <name type="scientific">Ensifer adhaerens</name>
    <name type="common">Sinorhizobium morelense</name>
    <dbReference type="NCBI Taxonomy" id="106592"/>
    <lineage>
        <taxon>Bacteria</taxon>
        <taxon>Pseudomonadati</taxon>
        <taxon>Pseudomonadota</taxon>
        <taxon>Alphaproteobacteria</taxon>
        <taxon>Hyphomicrobiales</taxon>
        <taxon>Rhizobiaceae</taxon>
        <taxon>Sinorhizobium/Ensifer group</taxon>
        <taxon>Ensifer</taxon>
    </lineage>
</organism>
<feature type="chain" id="PRO_0000435673" description="N-carbamoyl-D-amino acid hydrolase">
    <location>
        <begin position="1"/>
        <end position="304"/>
    </location>
</feature>
<feature type="domain" description="CN hydrolase" evidence="2">
    <location>
        <begin position="5"/>
        <end position="276"/>
    </location>
</feature>
<feature type="active site" evidence="1">
    <location>
        <position position="47"/>
    </location>
</feature>
<feature type="active site" evidence="1">
    <location>
        <position position="127"/>
    </location>
</feature>
<feature type="active site" evidence="1">
    <location>
        <position position="172"/>
    </location>
</feature>
<protein>
    <recommendedName>
        <fullName evidence="5">N-carbamoyl-D-amino acid hydrolase</fullName>
        <ecNumber evidence="3">3.5.1.77</ecNumber>
    </recommendedName>
    <alternativeName>
        <fullName evidence="4">D-carbamoylase</fullName>
    </alternativeName>
</protein>
<proteinExistence type="evidence at protein level"/>
<name>DCAS_ENSAD</name>
<reference evidence="6" key="1">
    <citation type="journal article" date="2006" name="Biochimie">
        <title>Thermostable D-carbamoylase from Sinorhizobium morelens S-5: purification, characterization and gene expression in Escherichia coli.</title>
        <authorList>
            <person name="Wu S."/>
            <person name="Liu Y."/>
            <person name="Zhao G."/>
            <person name="Wang J."/>
            <person name="Sun W."/>
        </authorList>
    </citation>
    <scope>NUCLEOTIDE SEQUENCE [GENOMIC DNA]</scope>
    <scope>PROTEIN SEQUENCE OF 2-11</scope>
    <scope>FUNCTION</scope>
    <scope>CATALYTIC ACTIVITY</scope>
    <scope>ACTIVITY REGULATION</scope>
    <scope>BIOPHYSICOCHEMICAL PROPERTIES</scope>
    <scope>SUBSTRATE SPECIFICITY</scope>
    <scope>SUBUNIT</scope>
    <scope>BIOTECHNOLOGY</scope>
    <source>
        <strain evidence="4">S-5</strain>
    </source>
</reference>
<accession>Q5S260</accession>